<gene>
    <name evidence="1" type="primary">nikB</name>
    <name type="synonym">oppB2</name>
    <name type="ordered locus">SAUSA300_1276</name>
</gene>
<keyword id="KW-1003">Cell membrane</keyword>
<keyword id="KW-0406">Ion transport</keyword>
<keyword id="KW-0472">Membrane</keyword>
<keyword id="KW-0533">Nickel</keyword>
<keyword id="KW-0921">Nickel transport</keyword>
<keyword id="KW-0812">Transmembrane</keyword>
<keyword id="KW-1133">Transmembrane helix</keyword>
<keyword id="KW-0813">Transport</keyword>
<reference key="1">
    <citation type="journal article" date="2006" name="Lancet">
        <title>Complete genome sequence of USA300, an epidemic clone of community-acquired meticillin-resistant Staphylococcus aureus.</title>
        <authorList>
            <person name="Diep B.A."/>
            <person name="Gill S.R."/>
            <person name="Chang R.F."/>
            <person name="Phan T.H."/>
            <person name="Chen J.H."/>
            <person name="Davidson M.G."/>
            <person name="Lin F."/>
            <person name="Lin J."/>
            <person name="Carleton H.A."/>
            <person name="Mongodin E.F."/>
            <person name="Sensabaugh G.F."/>
            <person name="Perdreau-Remington F."/>
        </authorList>
    </citation>
    <scope>NUCLEOTIDE SEQUENCE [LARGE SCALE GENOMIC DNA]</scope>
    <source>
        <strain>USA300</strain>
    </source>
</reference>
<comment type="function">
    <text evidence="1">Part of the ABC transporter complex NikABCDE (Opp2) involved in nickel import. Probably responsible for the translocation of the substrate across the membrane.</text>
</comment>
<comment type="subunit">
    <text evidence="1">The complex is composed of two ATP-binding proteins (NikD and NikE), two transmembrane proteins (NikB and NikC) and a solute-binding protein (NikA).</text>
</comment>
<comment type="subcellular location">
    <subcellularLocation>
        <location evidence="3">Cell membrane</location>
        <topology evidence="2">Multi-pass membrane protein</topology>
    </subcellularLocation>
</comment>
<comment type="similarity">
    <text evidence="3">Belongs to the binding-protein-dependent transport system permease family. OppBC subfamily.</text>
</comment>
<organism>
    <name type="scientific">Staphylococcus aureus (strain USA300)</name>
    <dbReference type="NCBI Taxonomy" id="367830"/>
    <lineage>
        <taxon>Bacteria</taxon>
        <taxon>Bacillati</taxon>
        <taxon>Bacillota</taxon>
        <taxon>Bacilli</taxon>
        <taxon>Bacillales</taxon>
        <taxon>Staphylococcaceae</taxon>
        <taxon>Staphylococcus</taxon>
    </lineage>
</organism>
<evidence type="ECO:0000250" key="1">
    <source>
        <dbReference type="UniProtKB" id="Q2FYQ5"/>
    </source>
</evidence>
<evidence type="ECO:0000255" key="2">
    <source>
        <dbReference type="PROSITE-ProRule" id="PRU00441"/>
    </source>
</evidence>
<evidence type="ECO:0000305" key="3"/>
<feature type="chain" id="PRO_0000276781" description="Nickel import system permease protein NikB">
    <location>
        <begin position="1"/>
        <end position="328"/>
    </location>
</feature>
<feature type="transmembrane region" description="Helical" evidence="2">
    <location>
        <begin position="11"/>
        <end position="31"/>
    </location>
</feature>
<feature type="transmembrane region" description="Helical" evidence="2">
    <location>
        <begin position="104"/>
        <end position="124"/>
    </location>
</feature>
<feature type="transmembrane region" description="Helical" evidence="2">
    <location>
        <begin position="139"/>
        <end position="159"/>
    </location>
</feature>
<feature type="transmembrane region" description="Helical" evidence="2">
    <location>
        <begin position="170"/>
        <end position="190"/>
    </location>
</feature>
<feature type="transmembrane region" description="Helical" evidence="2">
    <location>
        <begin position="229"/>
        <end position="249"/>
    </location>
</feature>
<feature type="transmembrane region" description="Helical" evidence="2">
    <location>
        <begin position="279"/>
        <end position="299"/>
    </location>
</feature>
<feature type="domain" description="ABC transmembrane type-1" evidence="2">
    <location>
        <begin position="100"/>
        <end position="297"/>
    </location>
</feature>
<protein>
    <recommendedName>
        <fullName evidence="1">Nickel import system permease protein NikB</fullName>
    </recommendedName>
</protein>
<proteinExistence type="inferred from homology"/>
<sequence>MFIIKSMLYRLMQMIVVLFVISTLTFILMKLSPGNPVDKILHLDVAQVSTEQINATKDKLGLNDSLLVQWWHWMNHLLHFNLGKSFESKEPVTQILFNYAPITLLISFSTLVVSLCISIPLGIIAAKRFHKWTDKVIRVISTLSISLPAFFIGIILLFIVTNLMNIDSVILSQFILPVITLSLGMCAYIIRLVRSNLLMLLQSNIVQASRLRGMNERYILIHDLLKPTILPIIPLLGISLGSLIGGTVVIENLFDIPGIGYLLMDSIKSRDYPVIQGCVLFIGFFVVIINTIADLLTLLLDPKQRLQLGNPKIKTNTPLISESSDRHA</sequence>
<dbReference type="EMBL" id="CP000255">
    <property type="protein sequence ID" value="ABD20380.1"/>
    <property type="molecule type" value="Genomic_DNA"/>
</dbReference>
<dbReference type="RefSeq" id="WP_000469949.1">
    <property type="nucleotide sequence ID" value="NZ_CP027476.1"/>
</dbReference>
<dbReference type="SMR" id="Q2FH55"/>
<dbReference type="KEGG" id="saa:SAUSA300_1276"/>
<dbReference type="HOGENOM" id="CLU_036879_0_2_9"/>
<dbReference type="Proteomes" id="UP000001939">
    <property type="component" value="Chromosome"/>
</dbReference>
<dbReference type="GO" id="GO:0005886">
    <property type="term" value="C:plasma membrane"/>
    <property type="evidence" value="ECO:0007669"/>
    <property type="project" value="UniProtKB-SubCell"/>
</dbReference>
<dbReference type="GO" id="GO:0015099">
    <property type="term" value="F:nickel cation transmembrane transporter activity"/>
    <property type="evidence" value="ECO:0007669"/>
    <property type="project" value="InterPro"/>
</dbReference>
<dbReference type="CDD" id="cd06261">
    <property type="entry name" value="TM_PBP2"/>
    <property type="match status" value="1"/>
</dbReference>
<dbReference type="Gene3D" id="1.10.3720.10">
    <property type="entry name" value="MetI-like"/>
    <property type="match status" value="1"/>
</dbReference>
<dbReference type="InterPro" id="IPR045621">
    <property type="entry name" value="BPD_transp_1_N"/>
</dbReference>
<dbReference type="InterPro" id="IPR000515">
    <property type="entry name" value="MetI-like"/>
</dbReference>
<dbReference type="InterPro" id="IPR035906">
    <property type="entry name" value="MetI-like_sf"/>
</dbReference>
<dbReference type="InterPro" id="IPR050045">
    <property type="entry name" value="Opp2B"/>
</dbReference>
<dbReference type="NCBIfam" id="NF045470">
    <property type="entry name" value="Opp2B"/>
    <property type="match status" value="1"/>
</dbReference>
<dbReference type="PANTHER" id="PTHR43163">
    <property type="entry name" value="DIPEPTIDE TRANSPORT SYSTEM PERMEASE PROTEIN DPPB-RELATED"/>
    <property type="match status" value="1"/>
</dbReference>
<dbReference type="PANTHER" id="PTHR43163:SF6">
    <property type="entry name" value="DIPEPTIDE TRANSPORT SYSTEM PERMEASE PROTEIN DPPB-RELATED"/>
    <property type="match status" value="1"/>
</dbReference>
<dbReference type="Pfam" id="PF00528">
    <property type="entry name" value="BPD_transp_1"/>
    <property type="match status" value="1"/>
</dbReference>
<dbReference type="Pfam" id="PF19300">
    <property type="entry name" value="BPD_transp_1_N"/>
    <property type="match status" value="1"/>
</dbReference>
<dbReference type="SUPFAM" id="SSF161098">
    <property type="entry name" value="MetI-like"/>
    <property type="match status" value="1"/>
</dbReference>
<dbReference type="PROSITE" id="PS50928">
    <property type="entry name" value="ABC_TM1"/>
    <property type="match status" value="1"/>
</dbReference>
<accession>Q2FH55</accession>
<name>NIKB_STAA3</name>